<organism>
    <name type="scientific">Yersinia pestis bv. Antiqua (strain Antiqua)</name>
    <dbReference type="NCBI Taxonomy" id="360102"/>
    <lineage>
        <taxon>Bacteria</taxon>
        <taxon>Pseudomonadati</taxon>
        <taxon>Pseudomonadota</taxon>
        <taxon>Gammaproteobacteria</taxon>
        <taxon>Enterobacterales</taxon>
        <taxon>Yersiniaceae</taxon>
        <taxon>Yersinia</taxon>
    </lineage>
</organism>
<evidence type="ECO:0000255" key="1">
    <source>
        <dbReference type="HAMAP-Rule" id="MF_00034"/>
    </source>
</evidence>
<sequence length="173" mass="18641">MAIVLGIDPGSRVTGYGVIRQQGRQLTYLGSGCIRTVVDDMPTRLKLIYAGVTEIITQFQPDFFAIEQVFMAKNPDSALKLGQARGAAIVAAVNLNLPVSEYAARQVKQTVVGTGAAEKSQVQHMVRSLLKLPANPQADAADALAIAITHCHLSQNTLRLGNDQMTLSRGRIR</sequence>
<feature type="chain" id="PRO_1000002856" description="Crossover junction endodeoxyribonuclease RuvC">
    <location>
        <begin position="1"/>
        <end position="173"/>
    </location>
</feature>
<feature type="active site" evidence="1">
    <location>
        <position position="8"/>
    </location>
</feature>
<feature type="active site" evidence="1">
    <location>
        <position position="67"/>
    </location>
</feature>
<feature type="active site" evidence="1">
    <location>
        <position position="139"/>
    </location>
</feature>
<feature type="binding site" evidence="1">
    <location>
        <position position="8"/>
    </location>
    <ligand>
        <name>Mg(2+)</name>
        <dbReference type="ChEBI" id="CHEBI:18420"/>
        <label>1</label>
    </ligand>
</feature>
<feature type="binding site" evidence="1">
    <location>
        <position position="67"/>
    </location>
    <ligand>
        <name>Mg(2+)</name>
        <dbReference type="ChEBI" id="CHEBI:18420"/>
        <label>2</label>
    </ligand>
</feature>
<feature type="binding site" evidence="1">
    <location>
        <position position="139"/>
    </location>
    <ligand>
        <name>Mg(2+)</name>
        <dbReference type="ChEBI" id="CHEBI:18420"/>
        <label>1</label>
    </ligand>
</feature>
<keyword id="KW-0963">Cytoplasm</keyword>
<keyword id="KW-0227">DNA damage</keyword>
<keyword id="KW-0233">DNA recombination</keyword>
<keyword id="KW-0234">DNA repair</keyword>
<keyword id="KW-0238">DNA-binding</keyword>
<keyword id="KW-0255">Endonuclease</keyword>
<keyword id="KW-0378">Hydrolase</keyword>
<keyword id="KW-0460">Magnesium</keyword>
<keyword id="KW-0479">Metal-binding</keyword>
<keyword id="KW-0540">Nuclease</keyword>
<comment type="function">
    <text evidence="1">The RuvA-RuvB-RuvC complex processes Holliday junction (HJ) DNA during genetic recombination and DNA repair. Endonuclease that resolves HJ intermediates. Cleaves cruciform DNA by making single-stranded nicks across the HJ at symmetrical positions within the homologous arms, yielding a 5'-phosphate and a 3'-hydroxyl group; requires a central core of homology in the junction. The consensus cleavage sequence is 5'-(A/T)TT(C/G)-3'. Cleavage occurs on the 3'-side of the TT dinucleotide at the point of strand exchange. HJ branch migration catalyzed by RuvA-RuvB allows RuvC to scan DNA until it finds its consensus sequence, where it cleaves and resolves the cruciform DNA.</text>
</comment>
<comment type="catalytic activity">
    <reaction evidence="1">
        <text>Endonucleolytic cleavage at a junction such as a reciprocal single-stranded crossover between two homologous DNA duplexes (Holliday junction).</text>
        <dbReference type="EC" id="3.1.21.10"/>
    </reaction>
</comment>
<comment type="cofactor">
    <cofactor evidence="1">
        <name>Mg(2+)</name>
        <dbReference type="ChEBI" id="CHEBI:18420"/>
    </cofactor>
    <text evidence="1">Binds 2 Mg(2+) ion per subunit.</text>
</comment>
<comment type="subunit">
    <text evidence="1">Homodimer which binds Holliday junction (HJ) DNA. The HJ becomes 2-fold symmetrical on binding to RuvC with unstacked arms; it has a different conformation from HJ DNA in complex with RuvA. In the full resolvosome a probable DNA-RuvA(4)-RuvB(12)-RuvC(2) complex forms which resolves the HJ.</text>
</comment>
<comment type="subcellular location">
    <subcellularLocation>
        <location evidence="1">Cytoplasm</location>
    </subcellularLocation>
</comment>
<comment type="similarity">
    <text evidence="1">Belongs to the RuvC family.</text>
</comment>
<reference key="1">
    <citation type="journal article" date="2006" name="J. Bacteriol.">
        <title>Complete genome sequence of Yersinia pestis strains Antiqua and Nepal516: evidence of gene reduction in an emerging pathogen.</title>
        <authorList>
            <person name="Chain P.S.G."/>
            <person name="Hu P."/>
            <person name="Malfatti S.A."/>
            <person name="Radnedge L."/>
            <person name="Larimer F."/>
            <person name="Vergez L.M."/>
            <person name="Worsham P."/>
            <person name="Chu M.C."/>
            <person name="Andersen G.L."/>
        </authorList>
    </citation>
    <scope>NUCLEOTIDE SEQUENCE [LARGE SCALE GENOMIC DNA]</scope>
    <source>
        <strain>Antiqua</strain>
    </source>
</reference>
<accession>Q1C817</accession>
<protein>
    <recommendedName>
        <fullName evidence="1">Crossover junction endodeoxyribonuclease RuvC</fullName>
        <ecNumber evidence="1">3.1.21.10</ecNumber>
    </recommendedName>
    <alternativeName>
        <fullName evidence="1">Holliday junction nuclease RuvC</fullName>
    </alternativeName>
    <alternativeName>
        <fullName evidence="1">Holliday junction resolvase RuvC</fullName>
    </alternativeName>
</protein>
<proteinExistence type="inferred from homology"/>
<gene>
    <name evidence="1" type="primary">ruvC</name>
    <name type="ordered locus">YPA_1438</name>
</gene>
<name>RUVC_YERPA</name>
<dbReference type="EC" id="3.1.21.10" evidence="1"/>
<dbReference type="EMBL" id="CP000308">
    <property type="protein sequence ID" value="ABG13405.1"/>
    <property type="molecule type" value="Genomic_DNA"/>
</dbReference>
<dbReference type="RefSeq" id="WP_002211201.1">
    <property type="nucleotide sequence ID" value="NZ_CP009906.1"/>
</dbReference>
<dbReference type="SMR" id="Q1C817"/>
<dbReference type="GeneID" id="57976605"/>
<dbReference type="KEGG" id="ypa:YPA_1438"/>
<dbReference type="Proteomes" id="UP000001971">
    <property type="component" value="Chromosome"/>
</dbReference>
<dbReference type="GO" id="GO:0005737">
    <property type="term" value="C:cytoplasm"/>
    <property type="evidence" value="ECO:0007669"/>
    <property type="project" value="UniProtKB-SubCell"/>
</dbReference>
<dbReference type="GO" id="GO:0048476">
    <property type="term" value="C:Holliday junction resolvase complex"/>
    <property type="evidence" value="ECO:0007669"/>
    <property type="project" value="UniProtKB-UniRule"/>
</dbReference>
<dbReference type="GO" id="GO:0008821">
    <property type="term" value="F:crossover junction DNA endonuclease activity"/>
    <property type="evidence" value="ECO:0007669"/>
    <property type="project" value="UniProtKB-UniRule"/>
</dbReference>
<dbReference type="GO" id="GO:0003677">
    <property type="term" value="F:DNA binding"/>
    <property type="evidence" value="ECO:0007669"/>
    <property type="project" value="UniProtKB-KW"/>
</dbReference>
<dbReference type="GO" id="GO:0000287">
    <property type="term" value="F:magnesium ion binding"/>
    <property type="evidence" value="ECO:0007669"/>
    <property type="project" value="UniProtKB-UniRule"/>
</dbReference>
<dbReference type="GO" id="GO:0006310">
    <property type="term" value="P:DNA recombination"/>
    <property type="evidence" value="ECO:0007669"/>
    <property type="project" value="UniProtKB-UniRule"/>
</dbReference>
<dbReference type="GO" id="GO:0006281">
    <property type="term" value="P:DNA repair"/>
    <property type="evidence" value="ECO:0007669"/>
    <property type="project" value="UniProtKB-UniRule"/>
</dbReference>
<dbReference type="CDD" id="cd16962">
    <property type="entry name" value="RuvC"/>
    <property type="match status" value="1"/>
</dbReference>
<dbReference type="FunFam" id="3.30.420.10:FF:000002">
    <property type="entry name" value="Crossover junction endodeoxyribonuclease RuvC"/>
    <property type="match status" value="1"/>
</dbReference>
<dbReference type="Gene3D" id="3.30.420.10">
    <property type="entry name" value="Ribonuclease H-like superfamily/Ribonuclease H"/>
    <property type="match status" value="1"/>
</dbReference>
<dbReference type="HAMAP" id="MF_00034">
    <property type="entry name" value="RuvC"/>
    <property type="match status" value="1"/>
</dbReference>
<dbReference type="InterPro" id="IPR012337">
    <property type="entry name" value="RNaseH-like_sf"/>
</dbReference>
<dbReference type="InterPro" id="IPR036397">
    <property type="entry name" value="RNaseH_sf"/>
</dbReference>
<dbReference type="InterPro" id="IPR020563">
    <property type="entry name" value="X-over_junc_endoDNase_Mg_BS"/>
</dbReference>
<dbReference type="InterPro" id="IPR002176">
    <property type="entry name" value="X-over_junc_endoDNase_RuvC"/>
</dbReference>
<dbReference type="NCBIfam" id="TIGR00228">
    <property type="entry name" value="ruvC"/>
    <property type="match status" value="1"/>
</dbReference>
<dbReference type="PANTHER" id="PTHR30194">
    <property type="entry name" value="CROSSOVER JUNCTION ENDODEOXYRIBONUCLEASE RUVC"/>
    <property type="match status" value="1"/>
</dbReference>
<dbReference type="PANTHER" id="PTHR30194:SF3">
    <property type="entry name" value="CROSSOVER JUNCTION ENDODEOXYRIBONUCLEASE RUVC"/>
    <property type="match status" value="1"/>
</dbReference>
<dbReference type="Pfam" id="PF02075">
    <property type="entry name" value="RuvC"/>
    <property type="match status" value="1"/>
</dbReference>
<dbReference type="PRINTS" id="PR00696">
    <property type="entry name" value="RSOLVASERUVC"/>
</dbReference>
<dbReference type="SUPFAM" id="SSF53098">
    <property type="entry name" value="Ribonuclease H-like"/>
    <property type="match status" value="1"/>
</dbReference>
<dbReference type="PROSITE" id="PS01321">
    <property type="entry name" value="RUVC"/>
    <property type="match status" value="1"/>
</dbReference>